<reference key="1">
    <citation type="submission" date="2007-09" db="EMBL/GenBank/DDBJ databases">
        <title>Complete sequence of chromosome of Serratia proteamaculans 568.</title>
        <authorList>
            <consortium name="US DOE Joint Genome Institute"/>
            <person name="Copeland A."/>
            <person name="Lucas S."/>
            <person name="Lapidus A."/>
            <person name="Barry K."/>
            <person name="Glavina del Rio T."/>
            <person name="Dalin E."/>
            <person name="Tice H."/>
            <person name="Pitluck S."/>
            <person name="Chain P."/>
            <person name="Malfatti S."/>
            <person name="Shin M."/>
            <person name="Vergez L."/>
            <person name="Schmutz J."/>
            <person name="Larimer F."/>
            <person name="Land M."/>
            <person name="Hauser L."/>
            <person name="Kyrpides N."/>
            <person name="Kim E."/>
            <person name="Taghavi S."/>
            <person name="Newman L."/>
            <person name="Vangronsveld J."/>
            <person name="van der Lelie D."/>
            <person name="Richardson P."/>
        </authorList>
    </citation>
    <scope>NUCLEOTIDE SEQUENCE [LARGE SCALE GENOMIC DNA]</scope>
    <source>
        <strain>568</strain>
    </source>
</reference>
<sequence length="127" mass="14465">MITGIQITKANDQALVNSFWLLDDEKSEARCVCAKANYAEDQVVPVSELGQIEYREVPLEMQSTVRVEGGQHLNVNVLRRETLEDAVKHPEKYPQLTIRVSGYAVRFNSLTPEQQRDVITRTFTESL</sequence>
<accession>A8GI38</accession>
<dbReference type="EMBL" id="CP000826">
    <property type="protein sequence ID" value="ABV42778.1"/>
    <property type="molecule type" value="Genomic_DNA"/>
</dbReference>
<dbReference type="SMR" id="A8GI38"/>
<dbReference type="STRING" id="399741.Spro_3682"/>
<dbReference type="KEGG" id="spe:Spro_3682"/>
<dbReference type="eggNOG" id="COG3445">
    <property type="taxonomic scope" value="Bacteria"/>
</dbReference>
<dbReference type="HOGENOM" id="CLU_133780_0_0_6"/>
<dbReference type="OrthoDB" id="9803969at2"/>
<dbReference type="GO" id="GO:0005829">
    <property type="term" value="C:cytosol"/>
    <property type="evidence" value="ECO:0007669"/>
    <property type="project" value="TreeGrafter"/>
</dbReference>
<dbReference type="GO" id="GO:0008861">
    <property type="term" value="F:formate C-acetyltransferase activity"/>
    <property type="evidence" value="ECO:0007669"/>
    <property type="project" value="TreeGrafter"/>
</dbReference>
<dbReference type="FunFam" id="3.20.70.20:FF:000002">
    <property type="entry name" value="Autonomous glycyl radical cofactor"/>
    <property type="match status" value="1"/>
</dbReference>
<dbReference type="Gene3D" id="3.20.70.20">
    <property type="match status" value="1"/>
</dbReference>
<dbReference type="HAMAP" id="MF_00806">
    <property type="entry name" value="GrcA"/>
    <property type="match status" value="1"/>
</dbReference>
<dbReference type="InterPro" id="IPR050244">
    <property type="entry name" value="Auton_GlycylRad_Cofactor"/>
</dbReference>
<dbReference type="InterPro" id="IPR019777">
    <property type="entry name" value="Form_AcTrfase_GR_CS"/>
</dbReference>
<dbReference type="InterPro" id="IPR001150">
    <property type="entry name" value="Gly_radical"/>
</dbReference>
<dbReference type="InterPro" id="IPR011140">
    <property type="entry name" value="Glycyl_radical_cofactor_GrcA"/>
</dbReference>
<dbReference type="NCBIfam" id="TIGR04365">
    <property type="entry name" value="spare_glycyl"/>
    <property type="match status" value="1"/>
</dbReference>
<dbReference type="PANTHER" id="PTHR30191">
    <property type="entry name" value="FORMATE ACETYLTRANSFERASE"/>
    <property type="match status" value="1"/>
</dbReference>
<dbReference type="PANTHER" id="PTHR30191:SF0">
    <property type="entry name" value="FORMATE ACETYLTRANSFERASE 1"/>
    <property type="match status" value="1"/>
</dbReference>
<dbReference type="Pfam" id="PF01228">
    <property type="entry name" value="Gly_radical"/>
    <property type="match status" value="1"/>
</dbReference>
<dbReference type="PIRSF" id="PIRSF000378">
    <property type="entry name" value="Gly_radicl_yfiD"/>
    <property type="match status" value="1"/>
</dbReference>
<dbReference type="SUPFAM" id="SSF51998">
    <property type="entry name" value="PFL-like glycyl radical enzymes"/>
    <property type="match status" value="1"/>
</dbReference>
<dbReference type="PROSITE" id="PS00850">
    <property type="entry name" value="GLY_RADICAL_1"/>
    <property type="match status" value="1"/>
</dbReference>
<dbReference type="PROSITE" id="PS51149">
    <property type="entry name" value="GLY_RADICAL_2"/>
    <property type="match status" value="1"/>
</dbReference>
<comment type="function">
    <text evidence="1">Acts as a radical domain for damaged PFL and possibly other radical proteins.</text>
</comment>
<organism>
    <name type="scientific">Serratia proteamaculans (strain 568)</name>
    <dbReference type="NCBI Taxonomy" id="399741"/>
    <lineage>
        <taxon>Bacteria</taxon>
        <taxon>Pseudomonadati</taxon>
        <taxon>Pseudomonadota</taxon>
        <taxon>Gammaproteobacteria</taxon>
        <taxon>Enterobacterales</taxon>
        <taxon>Yersiniaceae</taxon>
        <taxon>Serratia</taxon>
    </lineage>
</organism>
<proteinExistence type="inferred from homology"/>
<keyword id="KW-0556">Organic radical</keyword>
<gene>
    <name evidence="1" type="primary">grcA</name>
    <name type="ordered locus">Spro_3682</name>
</gene>
<protein>
    <recommendedName>
        <fullName evidence="1">Autonomous glycyl radical cofactor</fullName>
    </recommendedName>
</protein>
<feature type="chain" id="PRO_1000083733" description="Autonomous glycyl radical cofactor">
    <location>
        <begin position="1"/>
        <end position="127"/>
    </location>
</feature>
<feature type="domain" description="Glycine radical" evidence="1">
    <location>
        <begin position="5"/>
        <end position="127"/>
    </location>
</feature>
<feature type="modified residue" description="Glycine radical" evidence="1">
    <location>
        <position position="102"/>
    </location>
</feature>
<evidence type="ECO:0000255" key="1">
    <source>
        <dbReference type="HAMAP-Rule" id="MF_00806"/>
    </source>
</evidence>
<name>GRCA_SERP5</name>